<proteinExistence type="inferred from homology"/>
<organism>
    <name type="scientific">Haemophilus ducreyi (strain 35000HP / ATCC 700724)</name>
    <dbReference type="NCBI Taxonomy" id="233412"/>
    <lineage>
        <taxon>Bacteria</taxon>
        <taxon>Pseudomonadati</taxon>
        <taxon>Pseudomonadota</taxon>
        <taxon>Gammaproteobacteria</taxon>
        <taxon>Pasteurellales</taxon>
        <taxon>Pasteurellaceae</taxon>
        <taxon>Haemophilus</taxon>
    </lineage>
</organism>
<keyword id="KW-0963">Cytoplasm</keyword>
<keyword id="KW-1185">Reference proteome</keyword>
<name>RECX_HAEDU</name>
<reference key="1">
    <citation type="submission" date="2003-06" db="EMBL/GenBank/DDBJ databases">
        <title>The complete genome sequence of Haemophilus ducreyi.</title>
        <authorList>
            <person name="Munson R.S. Jr."/>
            <person name="Ray W.C."/>
            <person name="Mahairas G."/>
            <person name="Sabo P."/>
            <person name="Mungur R."/>
            <person name="Johnson L."/>
            <person name="Nguyen D."/>
            <person name="Wang J."/>
            <person name="Forst C."/>
            <person name="Hood L."/>
        </authorList>
    </citation>
    <scope>NUCLEOTIDE SEQUENCE [LARGE SCALE GENOMIC DNA]</scope>
    <source>
        <strain>35000HP / ATCC 700724</strain>
    </source>
</reference>
<comment type="function">
    <text evidence="1">Modulates RecA activity.</text>
</comment>
<comment type="subcellular location">
    <subcellularLocation>
        <location evidence="1">Cytoplasm</location>
    </subcellularLocation>
</comment>
<comment type="similarity">
    <text evidence="1">Belongs to the RecX family.</text>
</comment>
<gene>
    <name evidence="1" type="primary">recX</name>
    <name type="ordered locus">HD_0411</name>
</gene>
<sequence length="151" mass="18586">MPKYTAVNYLIYLLSKRDYSEYDLRNKLIQKQYDTDEIEHAIQQAQLNNWQNDERYCASFIRYRSQQGIGPRRLKQELRLKGIKDYLISEQLQNTEIDWFSLAELLFEKKRPLDWNIKVKQKMWRFMLSRGFYNEHFSHLMDLEEVSKEYE</sequence>
<dbReference type="EMBL" id="AE017143">
    <property type="protein sequence ID" value="AAP95376.1"/>
    <property type="molecule type" value="Genomic_DNA"/>
</dbReference>
<dbReference type="RefSeq" id="WP_010944429.1">
    <property type="nucleotide sequence ID" value="NC_002940.2"/>
</dbReference>
<dbReference type="SMR" id="Q7VNS6"/>
<dbReference type="STRING" id="233412.HD_0411"/>
<dbReference type="KEGG" id="hdu:HD_0411"/>
<dbReference type="eggNOG" id="COG2137">
    <property type="taxonomic scope" value="Bacteria"/>
</dbReference>
<dbReference type="HOGENOM" id="CLU_066607_3_2_6"/>
<dbReference type="OrthoDB" id="7066780at2"/>
<dbReference type="Proteomes" id="UP000001022">
    <property type="component" value="Chromosome"/>
</dbReference>
<dbReference type="GO" id="GO:0005737">
    <property type="term" value="C:cytoplasm"/>
    <property type="evidence" value="ECO:0007669"/>
    <property type="project" value="UniProtKB-SubCell"/>
</dbReference>
<dbReference type="GO" id="GO:0006282">
    <property type="term" value="P:regulation of DNA repair"/>
    <property type="evidence" value="ECO:0007669"/>
    <property type="project" value="UniProtKB-UniRule"/>
</dbReference>
<dbReference type="Gene3D" id="1.10.10.10">
    <property type="entry name" value="Winged helix-like DNA-binding domain superfamily/Winged helix DNA-binding domain"/>
    <property type="match status" value="3"/>
</dbReference>
<dbReference type="HAMAP" id="MF_01114">
    <property type="entry name" value="RecX"/>
    <property type="match status" value="1"/>
</dbReference>
<dbReference type="InterPro" id="IPR053926">
    <property type="entry name" value="RecX_HTH_1st"/>
</dbReference>
<dbReference type="InterPro" id="IPR053924">
    <property type="entry name" value="RecX_HTH_2nd"/>
</dbReference>
<dbReference type="InterPro" id="IPR003783">
    <property type="entry name" value="Regulatory_RecX"/>
</dbReference>
<dbReference type="InterPro" id="IPR036388">
    <property type="entry name" value="WH-like_DNA-bd_sf"/>
</dbReference>
<dbReference type="NCBIfam" id="NF001057">
    <property type="entry name" value="PRK00117.3-3"/>
    <property type="match status" value="1"/>
</dbReference>
<dbReference type="PANTHER" id="PTHR33602">
    <property type="entry name" value="REGULATORY PROTEIN RECX FAMILY PROTEIN"/>
    <property type="match status" value="1"/>
</dbReference>
<dbReference type="PANTHER" id="PTHR33602:SF1">
    <property type="entry name" value="REGULATORY PROTEIN RECX FAMILY PROTEIN"/>
    <property type="match status" value="1"/>
</dbReference>
<dbReference type="Pfam" id="PF21982">
    <property type="entry name" value="RecX_HTH1"/>
    <property type="match status" value="1"/>
</dbReference>
<dbReference type="Pfam" id="PF02631">
    <property type="entry name" value="RecX_HTH2"/>
    <property type="match status" value="1"/>
</dbReference>
<accession>Q7VNS6</accession>
<evidence type="ECO:0000255" key="1">
    <source>
        <dbReference type="HAMAP-Rule" id="MF_01114"/>
    </source>
</evidence>
<feature type="chain" id="PRO_0000162435" description="Regulatory protein RecX">
    <location>
        <begin position="1"/>
        <end position="151"/>
    </location>
</feature>
<protein>
    <recommendedName>
        <fullName evidence="1">Regulatory protein RecX</fullName>
    </recommendedName>
</protein>